<feature type="chain" id="PRO_0000215353" description="Transient receptor potential cation channel subfamily V member 5">
    <location>
        <begin position="1"/>
        <end position="723"/>
    </location>
</feature>
<feature type="topological domain" description="Cytoplasmic" evidence="4">
    <location>
        <begin position="1"/>
        <end position="320"/>
    </location>
</feature>
<feature type="transmembrane region" description="Helical" evidence="4">
    <location>
        <begin position="321"/>
        <end position="341"/>
    </location>
</feature>
<feature type="topological domain" description="Extracellular" evidence="4">
    <location>
        <begin position="342"/>
        <end position="378"/>
    </location>
</feature>
<feature type="transmembrane region" description="Helical" evidence="4">
    <location>
        <begin position="379"/>
        <end position="401"/>
    </location>
</feature>
<feature type="topological domain" description="Cytoplasmic" evidence="4">
    <location>
        <begin position="402"/>
        <end position="412"/>
    </location>
</feature>
<feature type="transmembrane region" description="Helical" evidence="4">
    <location>
        <begin position="413"/>
        <end position="435"/>
    </location>
</feature>
<feature type="topological domain" description="Extracellular" evidence="4">
    <location>
        <begin position="436"/>
        <end position="441"/>
    </location>
</feature>
<feature type="transmembrane region" description="Helical" evidence="4">
    <location>
        <begin position="442"/>
        <end position="462"/>
    </location>
</feature>
<feature type="topological domain" description="Cytoplasmic" evidence="4">
    <location>
        <begin position="463"/>
        <end position="485"/>
    </location>
</feature>
<feature type="transmembrane region" description="Helical" evidence="4">
    <location>
        <begin position="486"/>
        <end position="506"/>
    </location>
</feature>
<feature type="intramembrane region" description="Pore-forming" evidence="4">
    <location>
        <begin position="517"/>
        <end position="537"/>
    </location>
</feature>
<feature type="transmembrane region" description="Helical" evidence="4">
    <location>
        <begin position="550"/>
        <end position="570"/>
    </location>
</feature>
<feature type="topological domain" description="Cytoplasmic" evidence="4">
    <location>
        <begin position="571"/>
        <end position="723"/>
    </location>
</feature>
<feature type="repeat" description="ANK 1" evidence="5">
    <location>
        <begin position="72"/>
        <end position="101"/>
    </location>
</feature>
<feature type="repeat" description="ANK 2" evidence="5">
    <location>
        <begin position="110"/>
        <end position="139"/>
    </location>
</feature>
<feature type="repeat" description="ANK 3" evidence="5">
    <location>
        <begin position="156"/>
        <end position="185"/>
    </location>
</feature>
<feature type="repeat" description="ANK 4" evidence="5">
    <location>
        <begin position="189"/>
        <end position="222"/>
    </location>
</feature>
<feature type="repeat" description="ANK 5" evidence="5">
    <location>
        <begin position="232"/>
        <end position="261"/>
    </location>
</feature>
<feature type="region of interest" description="Interaction with S100A10" evidence="1">
    <location>
        <begin position="591"/>
        <end position="595"/>
    </location>
</feature>
<feature type="region of interest" description="Involved in Ca(2+)-dependent inactivation" evidence="4">
    <location>
        <begin position="643"/>
        <end position="646"/>
    </location>
</feature>
<feature type="region of interest" description="Disordered" evidence="6">
    <location>
        <begin position="651"/>
        <end position="674"/>
    </location>
</feature>
<feature type="region of interest" description="Involved in Ca(2+)-dependent inactivation" evidence="4">
    <location>
        <begin position="693"/>
        <end position="723"/>
    </location>
</feature>
<feature type="compositionally biased region" description="Polar residues" evidence="6">
    <location>
        <begin position="654"/>
        <end position="667"/>
    </location>
</feature>
<feature type="binding site" evidence="3">
    <location>
        <position position="535"/>
    </location>
    <ligand>
        <name>Ca(2+)</name>
        <dbReference type="ChEBI" id="CHEBI:29108"/>
        <note>ligand shared between two neighboring subunits</note>
    </ligand>
</feature>
<feature type="modified residue" description="Phosphothreonine" evidence="1">
    <location>
        <position position="678"/>
    </location>
</feature>
<feature type="modified residue" description="Phosphoserine" evidence="1">
    <location>
        <position position="682"/>
    </location>
</feature>
<feature type="glycosylation site" description="N-linked (GlcNAc...) asparagine" evidence="5">
    <location>
        <position position="351"/>
    </location>
</feature>
<feature type="splice variant" id="VSP_013438" description="In isoform 2." evidence="9">
    <location>
        <begin position="248"/>
        <end position="296"/>
    </location>
</feature>
<feature type="sequence conflict" description="In Ref. 2; BAA99541." evidence="10" ref="2">
    <original>V</original>
    <variation>L</variation>
    <location>
        <position position="290"/>
    </location>
</feature>
<feature type="sequence conflict" description="In Ref. 2; BAA99541." evidence="10" ref="2">
    <original>K</original>
    <variation>I</variation>
    <location>
        <position position="295"/>
    </location>
</feature>
<feature type="sequence conflict" description="In Ref. 2; BAA99541." evidence="10" ref="2">
    <original>F</original>
    <variation>S</variation>
    <location>
        <position position="331"/>
    </location>
</feature>
<feature type="sequence conflict" description="In Ref. 2; BAA99541." evidence="10" ref="2">
    <original>W</original>
    <variation>R</variation>
    <location>
        <position position="488"/>
    </location>
</feature>
<proteinExistence type="evidence at protein level"/>
<name>TRPV5_RAT</name>
<protein>
    <recommendedName>
        <fullName>Transient receptor potential cation channel subfamily V member 5</fullName>
        <shortName>TrpV5</shortName>
    </recommendedName>
    <alternativeName>
        <fullName evidence="8">Calcium transporter 2</fullName>
        <shortName evidence="8">CaT2</shortName>
    </alternativeName>
    <alternativeName>
        <fullName>Epithelial calcium channel 1</fullName>
        <shortName>ECaC1</shortName>
    </alternativeName>
    <alternativeName>
        <fullName>Osm-9-like TRP channel 3</fullName>
        <shortName>OTRPC3</shortName>
    </alternativeName>
</protein>
<keyword id="KW-0025">Alternative splicing</keyword>
<keyword id="KW-0040">ANK repeat</keyword>
<keyword id="KW-0106">Calcium</keyword>
<keyword id="KW-0107">Calcium channel</keyword>
<keyword id="KW-0109">Calcium transport</keyword>
<keyword id="KW-0112">Calmodulin-binding</keyword>
<keyword id="KW-1003">Cell membrane</keyword>
<keyword id="KW-0325">Glycoprotein</keyword>
<keyword id="KW-0407">Ion channel</keyword>
<keyword id="KW-0406">Ion transport</keyword>
<keyword id="KW-0472">Membrane</keyword>
<keyword id="KW-0479">Metal-binding</keyword>
<keyword id="KW-0597">Phosphoprotein</keyword>
<keyword id="KW-1185">Reference proteome</keyword>
<keyword id="KW-0677">Repeat</keyword>
<keyword id="KW-0812">Transmembrane</keyword>
<keyword id="KW-1133">Transmembrane helix</keyword>
<keyword id="KW-0813">Transport</keyword>
<comment type="function">
    <text evidence="1 4 7">Constitutively active calcium selective cation channel thought to be involved in Ca(2+) reabsorption in kidney and intestine (PubMed:10875938). Required for normal Ca(2+) reabsorption in the kidney distal convoluted tubules (By similarity). The channel is activated by low internal calcium level and the current exhibits an inward rectification (By similarity). A Ca(2+)-dependent feedback regulation includes fast channel inactivation and slow current decay (By similarity). Heteromeric assembly with TRPV6 seems to modify channel properties. TRPV5-TRPV6 heteromultimeric concatemers exhibit voltage-dependent gating (By similarity).</text>
</comment>
<comment type="catalytic activity">
    <reaction evidence="7">
        <text>Ca(2+)(in) = Ca(2+)(out)</text>
        <dbReference type="Rhea" id="RHEA:29671"/>
        <dbReference type="ChEBI" id="CHEBI:29108"/>
    </reaction>
</comment>
<comment type="activity regulation">
    <text evidence="2">Activated by WNK3.</text>
</comment>
<comment type="subunit">
    <text evidence="1 4">Homotetramer and probably heterotetramer with TRPV6. Interacts with TRPV6 (By similarity). Interacts with S100A10 and probably with the ANAX2-S100A10 heterotetramer. The interaction with S100A10 is required for the trafficking to the plasma membrane. Interacts with calmodulin. Interacts with BSPRY, which results in its inactivation (By similarity).</text>
</comment>
<comment type="subcellular location">
    <subcellularLocation>
        <location evidence="7">Cell membrane</location>
        <topology evidence="10">Multi-pass membrane protein</topology>
    </subcellularLocation>
    <subcellularLocation>
        <location evidence="2">Apical cell membrane</location>
        <topology evidence="2">Multi-pass membrane protein</topology>
    </subcellularLocation>
    <text evidence="1 2">Colocalized with S100A10 and ANAX2 along the apical domain of kidney distal tubular cells (By similarity). The expression of the glycosylated form in the cell membrane is increased in the presence of WNK3 (By similarity).</text>
</comment>
<comment type="alternative products">
    <event type="alternative splicing"/>
    <isoform>
        <id>Q9JIP0-1</id>
        <name>1</name>
        <sequence type="displayed"/>
    </isoform>
    <isoform>
        <id>Q9JIP0-2</id>
        <name>2</name>
        <sequence type="described" ref="VSP_013438"/>
    </isoform>
</comment>
<comment type="tissue specificity">
    <text evidence="7">Detected in kidney (at protein level). Detected in kidney.</text>
</comment>
<comment type="PTM">
    <text evidence="2">Glycosylated.</text>
</comment>
<comment type="similarity">
    <text evidence="10">Belongs to the transient receptor (TC 1.A.4) family. TrpV subfamily. TRPV5 sub-subfamily.</text>
</comment>
<accession>Q9JIP0</accession>
<accession>Q5UC98</accession>
<accession>Q9JJL2</accession>
<sequence length="723" mass="82454">MGVKKPWIQLQKRLNWWVREQDWNQHVDQLHMLQQKSIWESPLLRAAKENDMCTLKRLQHDQNCDFRQRGALGETALHVAALYDNLDAAIMLMETAPYLVTESTLCEPFVGQTALHIAIMNQNVNLVRALLARGASASARATGSAFHRSSHNLIYYGEHPLSFAACVGSEEIVRLLIEHGADIRAQDSLGNTVLHILVLQPNKTFACQMYNLLLSHDGGDHLKSLELVPNNQGLTPFKLAGVEGNTVMFQHLMQKRKHIQWSLGPLTSSIYDLTEIDSWGEDLSFLELVVSSKKKEARQILEQTPVKELVSLKWKKYGQPYFCLLGMLYIFYMICFTTCCVYRPLKFRDANRTHVRDNTVLEQKPLQEAYVTYQDKVRLVGELVTVIGAVVILLIEIPDIFRVGASRYFGHTVLGGPFHVIIITYASLVLLIMVMRLTSMNGEVVPISMALVLGWCSVMYFSRGFQMLGPFTIMIQKMIFGDLLRFCWLMAMVILGFASAFYIIFQTEDPESLGEFSDYPTAMFSTFELFLTIIDGPANYSVDLPFMYHLTYFAFAIIATLLMLNLFIAMMGDTHWRVAQERDELWRAQVVATTVMLERKMPRFLWPRSGICGCEYGLGDRWFLRVEHHQEQNPYRVLRYVEAFKSSDKEEVQEQLSEKQPSGTETGTLARGSVVLQTPPLSRTTSLSSNSHRGWEILRRNTLGHLNLGQDLGEGDGEEIYHF</sequence>
<organism>
    <name type="scientific">Rattus norvegicus</name>
    <name type="common">Rat</name>
    <dbReference type="NCBI Taxonomy" id="10116"/>
    <lineage>
        <taxon>Eukaryota</taxon>
        <taxon>Metazoa</taxon>
        <taxon>Chordata</taxon>
        <taxon>Craniata</taxon>
        <taxon>Vertebrata</taxon>
        <taxon>Euteleostomi</taxon>
        <taxon>Mammalia</taxon>
        <taxon>Eutheria</taxon>
        <taxon>Euarchontoglires</taxon>
        <taxon>Glires</taxon>
        <taxon>Rodentia</taxon>
        <taxon>Myomorpha</taxon>
        <taxon>Muroidea</taxon>
        <taxon>Muridae</taxon>
        <taxon>Murinae</taxon>
        <taxon>Rattus</taxon>
    </lineage>
</organism>
<dbReference type="EMBL" id="AF209196">
    <property type="protein sequence ID" value="AAF86309.1"/>
    <property type="molecule type" value="mRNA"/>
</dbReference>
<dbReference type="EMBL" id="AB032019">
    <property type="protein sequence ID" value="BAA99541.1"/>
    <property type="molecule type" value="mRNA"/>
</dbReference>
<dbReference type="EMBL" id="AY762624">
    <property type="protein sequence ID" value="AAV31121.1"/>
    <property type="molecule type" value="mRNA"/>
</dbReference>
<dbReference type="RefSeq" id="NP_446239.2">
    <molecule id="Q9JIP0-1"/>
    <property type="nucleotide sequence ID" value="NM_053787.2"/>
</dbReference>
<dbReference type="RefSeq" id="XP_063141473.1">
    <molecule id="Q9JIP0-2"/>
    <property type="nucleotide sequence ID" value="XM_063285403.1"/>
</dbReference>
<dbReference type="SMR" id="Q9JIP0"/>
<dbReference type="FunCoup" id="Q9JIP0">
    <property type="interactions" value="8"/>
</dbReference>
<dbReference type="STRING" id="10116.ENSRNOP00000020975"/>
<dbReference type="GlyCosmos" id="Q9JIP0">
    <property type="glycosylation" value="1 site, No reported glycans"/>
</dbReference>
<dbReference type="GlyGen" id="Q9JIP0">
    <property type="glycosylation" value="1 site"/>
</dbReference>
<dbReference type="PhosphoSitePlus" id="Q9JIP0"/>
<dbReference type="PaxDb" id="10116-ENSRNOP00000020975"/>
<dbReference type="Ensembl" id="ENSRNOT00000020975.6">
    <molecule id="Q9JIP0-1"/>
    <property type="protein sequence ID" value="ENSRNOP00000020975.2"/>
    <property type="gene ID" value="ENSRNOG00000015394.7"/>
</dbReference>
<dbReference type="Ensembl" id="ENSRNOT00000051687.4">
    <molecule id="Q9JIP0-2"/>
    <property type="protein sequence ID" value="ENSRNOP00000046276.2"/>
    <property type="gene ID" value="ENSRNOG00000015394.7"/>
</dbReference>
<dbReference type="GeneID" id="116469"/>
<dbReference type="KEGG" id="rno:116469"/>
<dbReference type="UCSC" id="RGD:620636">
    <molecule id="Q9JIP0-1"/>
    <property type="organism name" value="rat"/>
</dbReference>
<dbReference type="AGR" id="RGD:620636"/>
<dbReference type="CTD" id="56302"/>
<dbReference type="RGD" id="620636">
    <property type="gene designation" value="Trpv5"/>
</dbReference>
<dbReference type="eggNOG" id="KOG3676">
    <property type="taxonomic scope" value="Eukaryota"/>
</dbReference>
<dbReference type="GeneTree" id="ENSGT00940000161809"/>
<dbReference type="HOGENOM" id="CLU_012795_2_0_1"/>
<dbReference type="InParanoid" id="Q9JIP0"/>
<dbReference type="OMA" id="AYETHED"/>
<dbReference type="OrthoDB" id="533508at2759"/>
<dbReference type="PhylomeDB" id="Q9JIP0"/>
<dbReference type="TreeFam" id="TF314711"/>
<dbReference type="Reactome" id="R-RNO-3295583">
    <property type="pathway name" value="TRP channels"/>
</dbReference>
<dbReference type="PRO" id="PR:Q9JIP0"/>
<dbReference type="Proteomes" id="UP000002494">
    <property type="component" value="Chromosome 4"/>
</dbReference>
<dbReference type="Bgee" id="ENSRNOG00000015394">
    <property type="expression patterns" value="Expressed in kidney and 2 other cell types or tissues"/>
</dbReference>
<dbReference type="GO" id="GO:0016324">
    <property type="term" value="C:apical plasma membrane"/>
    <property type="evidence" value="ECO:0000314"/>
    <property type="project" value="RGD"/>
</dbReference>
<dbReference type="GO" id="GO:0034704">
    <property type="term" value="C:calcium channel complex"/>
    <property type="evidence" value="ECO:0000266"/>
    <property type="project" value="RGD"/>
</dbReference>
<dbReference type="GO" id="GO:0005886">
    <property type="term" value="C:plasma membrane"/>
    <property type="evidence" value="ECO:0000315"/>
    <property type="project" value="UniProtKB"/>
</dbReference>
<dbReference type="GO" id="GO:0005262">
    <property type="term" value="F:calcium channel activity"/>
    <property type="evidence" value="ECO:0000314"/>
    <property type="project" value="RGD"/>
</dbReference>
<dbReference type="GO" id="GO:0005516">
    <property type="term" value="F:calmodulin binding"/>
    <property type="evidence" value="ECO:0007669"/>
    <property type="project" value="UniProtKB-KW"/>
</dbReference>
<dbReference type="GO" id="GO:0046872">
    <property type="term" value="F:metal ion binding"/>
    <property type="evidence" value="ECO:0007669"/>
    <property type="project" value="UniProtKB-KW"/>
</dbReference>
<dbReference type="GO" id="GO:0055074">
    <property type="term" value="P:calcium ion homeostasis"/>
    <property type="evidence" value="ECO:0000266"/>
    <property type="project" value="RGD"/>
</dbReference>
<dbReference type="GO" id="GO:0098703">
    <property type="term" value="P:calcium ion import across plasma membrane"/>
    <property type="evidence" value="ECO:0000250"/>
    <property type="project" value="UniProtKB"/>
</dbReference>
<dbReference type="GO" id="GO:0070588">
    <property type="term" value="P:calcium ion transmembrane transport"/>
    <property type="evidence" value="ECO:0000315"/>
    <property type="project" value="UniProtKB"/>
</dbReference>
<dbReference type="GO" id="GO:0006816">
    <property type="term" value="P:calcium ion transport"/>
    <property type="evidence" value="ECO:0000250"/>
    <property type="project" value="UniProtKB"/>
</dbReference>
<dbReference type="GO" id="GO:0060402">
    <property type="term" value="P:calcium ion transport into cytosol"/>
    <property type="evidence" value="ECO:0000314"/>
    <property type="project" value="RGD"/>
</dbReference>
<dbReference type="GO" id="GO:0051289">
    <property type="term" value="P:protein homotetramerization"/>
    <property type="evidence" value="ECO:0000250"/>
    <property type="project" value="UniProtKB"/>
</dbReference>
<dbReference type="GO" id="GO:0035809">
    <property type="term" value="P:regulation of urine volume"/>
    <property type="evidence" value="ECO:0000250"/>
    <property type="project" value="UniProtKB"/>
</dbReference>
<dbReference type="CDD" id="cd22296">
    <property type="entry name" value="CBD_TRPV5_C"/>
    <property type="match status" value="1"/>
</dbReference>
<dbReference type="CDD" id="cd22192">
    <property type="entry name" value="TRPV5-6"/>
    <property type="match status" value="1"/>
</dbReference>
<dbReference type="FunFam" id="1.25.40.20:FF:000177">
    <property type="entry name" value="Transient receptor potential cation channel subfamily V member 6"/>
    <property type="match status" value="1"/>
</dbReference>
<dbReference type="Gene3D" id="1.25.40.20">
    <property type="entry name" value="Ankyrin repeat-containing domain"/>
    <property type="match status" value="1"/>
</dbReference>
<dbReference type="InterPro" id="IPR002110">
    <property type="entry name" value="Ankyrin_rpt"/>
</dbReference>
<dbReference type="InterPro" id="IPR036770">
    <property type="entry name" value="Ankyrin_rpt-contain_sf"/>
</dbReference>
<dbReference type="InterPro" id="IPR005821">
    <property type="entry name" value="Ion_trans_dom"/>
</dbReference>
<dbReference type="InterPro" id="IPR024862">
    <property type="entry name" value="TRPV"/>
</dbReference>
<dbReference type="InterPro" id="IPR008346">
    <property type="entry name" value="TRPV5"/>
</dbReference>
<dbReference type="InterPro" id="IPR008344">
    <property type="entry name" value="TRPV5/TRPV6"/>
</dbReference>
<dbReference type="NCBIfam" id="TIGR00870">
    <property type="entry name" value="trp"/>
    <property type="match status" value="1"/>
</dbReference>
<dbReference type="PANTHER" id="PTHR10582:SF11">
    <property type="entry name" value="TRANSIENT RECEPTOR POTENTIAL CATION CHANNEL SUBFAMILY V MEMBER 5"/>
    <property type="match status" value="1"/>
</dbReference>
<dbReference type="PANTHER" id="PTHR10582">
    <property type="entry name" value="TRANSIENT RECEPTOR POTENTIAL ION CHANNEL PROTEIN"/>
    <property type="match status" value="1"/>
</dbReference>
<dbReference type="Pfam" id="PF12796">
    <property type="entry name" value="Ank_2"/>
    <property type="match status" value="2"/>
</dbReference>
<dbReference type="Pfam" id="PF00520">
    <property type="entry name" value="Ion_trans"/>
    <property type="match status" value="1"/>
</dbReference>
<dbReference type="PRINTS" id="PR01415">
    <property type="entry name" value="ANKYRIN"/>
</dbReference>
<dbReference type="PRINTS" id="PR01765">
    <property type="entry name" value="ECACCHANNEL"/>
</dbReference>
<dbReference type="PRINTS" id="PR01767">
    <property type="entry name" value="ECACCHANNEL2"/>
</dbReference>
<dbReference type="SMART" id="SM00248">
    <property type="entry name" value="ANK"/>
    <property type="match status" value="4"/>
</dbReference>
<dbReference type="SUPFAM" id="SSF48403">
    <property type="entry name" value="Ankyrin repeat"/>
    <property type="match status" value="1"/>
</dbReference>
<dbReference type="PROSITE" id="PS50297">
    <property type="entry name" value="ANK_REP_REGION"/>
    <property type="match status" value="1"/>
</dbReference>
<dbReference type="PROSITE" id="PS50088">
    <property type="entry name" value="ANK_REPEAT"/>
    <property type="match status" value="2"/>
</dbReference>
<reference key="1">
    <citation type="journal article" date="2000" name="J. Biol. Chem.">
        <title>A rat kidney-specific calcium transporter in the distal nephron.</title>
        <authorList>
            <person name="Peng J.-B."/>
            <person name="Chen X.-Z."/>
            <person name="Berger U.V."/>
            <person name="Vassilev P.M."/>
            <person name="Brown E.M."/>
            <person name="Hediger M.A."/>
        </authorList>
    </citation>
    <scope>NUCLEOTIDE SEQUENCE [MRNA] (ISOFORM 1)</scope>
    <scope>FUNCTION</scope>
    <scope>SUBCELLULAR LOCATION</scope>
    <scope>TISSUE SPECIFICITY</scope>
    <scope>TRANSPORTER ACTIVITY</scope>
    <source>
        <strain>CD1 Charles River</strain>
        <tissue>Kidney cortex</tissue>
    </source>
</reference>
<reference key="2">
    <citation type="submission" date="1999-08" db="EMBL/GenBank/DDBJ databases">
        <authorList>
            <person name="Ishibashi K."/>
            <person name="Suzuki M."/>
            <person name="Imai M."/>
        </authorList>
    </citation>
    <scope>NUCLEOTIDE SEQUENCE [MRNA] (ISOFORM 1)</scope>
    <source>
        <tissue>Kidney</tissue>
    </source>
</reference>
<reference key="3">
    <citation type="submission" date="2004-09" db="EMBL/GenBank/DDBJ databases">
        <title>A variant of the TrpV5 calcium channel from rat.</title>
        <authorList>
            <person name="Nehrke K."/>
            <person name="Sherman T."/>
            <person name="Bushinsky D."/>
        </authorList>
    </citation>
    <scope>NUCLEOTIDE SEQUENCE [MRNA] (ISOFORM 2)</scope>
    <source>
        <strain>Sprague-Dawley</strain>
    </source>
</reference>
<gene>
    <name type="primary">Trpv5</name>
    <name type="synonym">Cat2</name>
    <name type="synonym">Ecac</name>
    <name type="synonym">Ecac1</name>
</gene>
<evidence type="ECO:0000250" key="1">
    <source>
        <dbReference type="UniProtKB" id="P69744"/>
    </source>
</evidence>
<evidence type="ECO:0000250" key="2">
    <source>
        <dbReference type="UniProtKB" id="Q9NQA5"/>
    </source>
</evidence>
<evidence type="ECO:0000250" key="3">
    <source>
        <dbReference type="UniProtKB" id="Q9R186"/>
    </source>
</evidence>
<evidence type="ECO:0000250" key="4">
    <source>
        <dbReference type="UniProtKB" id="Q9XSM3"/>
    </source>
</evidence>
<evidence type="ECO:0000255" key="5"/>
<evidence type="ECO:0000256" key="6">
    <source>
        <dbReference type="SAM" id="MobiDB-lite"/>
    </source>
</evidence>
<evidence type="ECO:0000269" key="7">
    <source>
    </source>
</evidence>
<evidence type="ECO:0000303" key="8">
    <source>
    </source>
</evidence>
<evidence type="ECO:0000303" key="9">
    <source ref="3"/>
</evidence>
<evidence type="ECO:0000305" key="10"/>